<name>MSRA_LIGS1</name>
<reference key="1">
    <citation type="journal article" date="2006" name="Proc. Natl. Acad. Sci. U.S.A.">
        <title>Multireplicon genome architecture of Lactobacillus salivarius.</title>
        <authorList>
            <person name="Claesson M.J."/>
            <person name="Li Y."/>
            <person name="Leahy S."/>
            <person name="Canchaya C."/>
            <person name="van Pijkeren J.P."/>
            <person name="Cerdeno-Tarraga A.M."/>
            <person name="Parkhill J."/>
            <person name="Flynn S."/>
            <person name="O'Sullivan G.C."/>
            <person name="Collins J.K."/>
            <person name="Higgins D."/>
            <person name="Shanahan F."/>
            <person name="Fitzgerald G.F."/>
            <person name="van Sinderen D."/>
            <person name="O'Toole P.W."/>
        </authorList>
    </citation>
    <scope>NUCLEOTIDE SEQUENCE [LARGE SCALE GENOMIC DNA]</scope>
    <source>
        <strain>UCC118</strain>
    </source>
</reference>
<accession>Q1WU33</accession>
<keyword id="KW-0560">Oxidoreductase</keyword>
<keyword id="KW-1185">Reference proteome</keyword>
<protein>
    <recommendedName>
        <fullName evidence="1">Peptide methionine sulfoxide reductase MsrA</fullName>
        <shortName evidence="1">Protein-methionine-S-oxide reductase</shortName>
        <ecNumber evidence="1">1.8.4.11</ecNumber>
    </recommendedName>
    <alternativeName>
        <fullName evidence="1">Peptide-methionine (S)-S-oxide reductase</fullName>
        <shortName evidence="1">Peptide Met(O) reductase</shortName>
    </alternativeName>
</protein>
<sequence>MSKDTAIFAGGCFWCMVEPFDKMPGIISVRSGYTGGFVENPTYEQVCSHTTGHTEAVKIVFDPEIISYAELVNIYWRQTDPTDAMGQFQDRGDSYRPVIFVHDEEQRKIAEESKKALAESGEFDKPIVTQIEDAKPFYEAEEYHQDFYKKNPERYALEEMGGREQFRNQHWN</sequence>
<gene>
    <name evidence="1" type="primary">msrA</name>
    <name type="ordered locus">LSL_0692</name>
</gene>
<comment type="function">
    <text evidence="1">Has an important function as a repair enzyme for proteins that have been inactivated by oxidation. Catalyzes the reversible oxidation-reduction of methionine sulfoxide in proteins to methionine.</text>
</comment>
<comment type="catalytic activity">
    <reaction evidence="1">
        <text>L-methionyl-[protein] + [thioredoxin]-disulfide + H2O = L-methionyl-(S)-S-oxide-[protein] + [thioredoxin]-dithiol</text>
        <dbReference type="Rhea" id="RHEA:14217"/>
        <dbReference type="Rhea" id="RHEA-COMP:10698"/>
        <dbReference type="Rhea" id="RHEA-COMP:10700"/>
        <dbReference type="Rhea" id="RHEA-COMP:12313"/>
        <dbReference type="Rhea" id="RHEA-COMP:12315"/>
        <dbReference type="ChEBI" id="CHEBI:15377"/>
        <dbReference type="ChEBI" id="CHEBI:16044"/>
        <dbReference type="ChEBI" id="CHEBI:29950"/>
        <dbReference type="ChEBI" id="CHEBI:44120"/>
        <dbReference type="ChEBI" id="CHEBI:50058"/>
        <dbReference type="EC" id="1.8.4.11"/>
    </reaction>
</comment>
<comment type="catalytic activity">
    <reaction evidence="1">
        <text>[thioredoxin]-disulfide + L-methionine + H2O = L-methionine (S)-S-oxide + [thioredoxin]-dithiol</text>
        <dbReference type="Rhea" id="RHEA:19993"/>
        <dbReference type="Rhea" id="RHEA-COMP:10698"/>
        <dbReference type="Rhea" id="RHEA-COMP:10700"/>
        <dbReference type="ChEBI" id="CHEBI:15377"/>
        <dbReference type="ChEBI" id="CHEBI:29950"/>
        <dbReference type="ChEBI" id="CHEBI:50058"/>
        <dbReference type="ChEBI" id="CHEBI:57844"/>
        <dbReference type="ChEBI" id="CHEBI:58772"/>
        <dbReference type="EC" id="1.8.4.11"/>
    </reaction>
</comment>
<comment type="similarity">
    <text evidence="1">Belongs to the MsrA Met sulfoxide reductase family.</text>
</comment>
<organism>
    <name type="scientific">Ligilactobacillus salivarius (strain UCC118)</name>
    <name type="common">Lactobacillus salivarius</name>
    <dbReference type="NCBI Taxonomy" id="362948"/>
    <lineage>
        <taxon>Bacteria</taxon>
        <taxon>Bacillati</taxon>
        <taxon>Bacillota</taxon>
        <taxon>Bacilli</taxon>
        <taxon>Lactobacillales</taxon>
        <taxon>Lactobacillaceae</taxon>
        <taxon>Ligilactobacillus</taxon>
    </lineage>
</organism>
<dbReference type="EC" id="1.8.4.11" evidence="1"/>
<dbReference type="EMBL" id="CP000233">
    <property type="protein sequence ID" value="ABD99502.1"/>
    <property type="molecule type" value="Genomic_DNA"/>
</dbReference>
<dbReference type="RefSeq" id="WP_003706147.1">
    <property type="nucleotide sequence ID" value="NC_007929.1"/>
</dbReference>
<dbReference type="RefSeq" id="YP_535585.1">
    <property type="nucleotide sequence ID" value="NC_007929.1"/>
</dbReference>
<dbReference type="SMR" id="Q1WU33"/>
<dbReference type="STRING" id="362948.LSL_0692"/>
<dbReference type="KEGG" id="lsl:LSL_0692"/>
<dbReference type="PATRIC" id="fig|362948.14.peg.772"/>
<dbReference type="HOGENOM" id="CLU_031040_10_1_9"/>
<dbReference type="OrthoDB" id="4174719at2"/>
<dbReference type="Proteomes" id="UP000006559">
    <property type="component" value="Chromosome"/>
</dbReference>
<dbReference type="GO" id="GO:0033744">
    <property type="term" value="F:L-methionine:thioredoxin-disulfide S-oxidoreductase activity"/>
    <property type="evidence" value="ECO:0007669"/>
    <property type="project" value="RHEA"/>
</dbReference>
<dbReference type="GO" id="GO:0008113">
    <property type="term" value="F:peptide-methionine (S)-S-oxide reductase activity"/>
    <property type="evidence" value="ECO:0007669"/>
    <property type="project" value="UniProtKB-UniRule"/>
</dbReference>
<dbReference type="GO" id="GO:0036211">
    <property type="term" value="P:protein modification process"/>
    <property type="evidence" value="ECO:0007669"/>
    <property type="project" value="UniProtKB-UniRule"/>
</dbReference>
<dbReference type="FunFam" id="3.30.1060.10:FF:000003">
    <property type="entry name" value="Peptide methionine sulfoxide reductase MsrA"/>
    <property type="match status" value="1"/>
</dbReference>
<dbReference type="Gene3D" id="3.30.1060.10">
    <property type="entry name" value="Peptide methionine sulphoxide reductase MsrA"/>
    <property type="match status" value="1"/>
</dbReference>
<dbReference type="HAMAP" id="MF_01401">
    <property type="entry name" value="MsrA"/>
    <property type="match status" value="1"/>
</dbReference>
<dbReference type="InterPro" id="IPR002569">
    <property type="entry name" value="Met_Sox_Rdtase_MsrA_dom"/>
</dbReference>
<dbReference type="InterPro" id="IPR036509">
    <property type="entry name" value="Met_Sox_Rdtase_MsrA_sf"/>
</dbReference>
<dbReference type="NCBIfam" id="TIGR00401">
    <property type="entry name" value="msrA"/>
    <property type="match status" value="1"/>
</dbReference>
<dbReference type="PANTHER" id="PTHR43774">
    <property type="entry name" value="PEPTIDE METHIONINE SULFOXIDE REDUCTASE"/>
    <property type="match status" value="1"/>
</dbReference>
<dbReference type="PANTHER" id="PTHR43774:SF1">
    <property type="entry name" value="PEPTIDE METHIONINE SULFOXIDE REDUCTASE MSRA 2"/>
    <property type="match status" value="1"/>
</dbReference>
<dbReference type="Pfam" id="PF01625">
    <property type="entry name" value="PMSR"/>
    <property type="match status" value="1"/>
</dbReference>
<dbReference type="SUPFAM" id="SSF55068">
    <property type="entry name" value="Peptide methionine sulfoxide reductase"/>
    <property type="match status" value="1"/>
</dbReference>
<evidence type="ECO:0000255" key="1">
    <source>
        <dbReference type="HAMAP-Rule" id="MF_01401"/>
    </source>
</evidence>
<proteinExistence type="inferred from homology"/>
<feature type="chain" id="PRO_1000068331" description="Peptide methionine sulfoxide reductase MsrA">
    <location>
        <begin position="1"/>
        <end position="172"/>
    </location>
</feature>
<feature type="active site" evidence="1">
    <location>
        <position position="12"/>
    </location>
</feature>